<reference key="1">
    <citation type="journal article" date="2011" name="J. Bacteriol.">
        <title>Complete genome sequence of the plant growth-promoting endophyte Burkholderia phytofirmans strain PsJN.</title>
        <authorList>
            <person name="Weilharter A."/>
            <person name="Mitter B."/>
            <person name="Shin M.V."/>
            <person name="Chain P.S."/>
            <person name="Nowak J."/>
            <person name="Sessitsch A."/>
        </authorList>
    </citation>
    <scope>NUCLEOTIDE SEQUENCE [LARGE SCALE GENOMIC DNA]</scope>
    <source>
        <strain>DSM 17436 / LMG 22146 / PsJN</strain>
    </source>
</reference>
<dbReference type="EMBL" id="CP001052">
    <property type="protein sequence ID" value="ACD18285.1"/>
    <property type="molecule type" value="Genomic_DNA"/>
</dbReference>
<dbReference type="RefSeq" id="WP_006050845.1">
    <property type="nucleotide sequence ID" value="NC_010681.1"/>
</dbReference>
<dbReference type="SMR" id="B2T7K4"/>
<dbReference type="STRING" id="398527.Bphyt_3898"/>
<dbReference type="KEGG" id="bpy:Bphyt_3898"/>
<dbReference type="eggNOG" id="COG0711">
    <property type="taxonomic scope" value="Bacteria"/>
</dbReference>
<dbReference type="HOGENOM" id="CLU_079215_4_5_4"/>
<dbReference type="OrthoDB" id="9788020at2"/>
<dbReference type="Proteomes" id="UP000001739">
    <property type="component" value="Chromosome 1"/>
</dbReference>
<dbReference type="GO" id="GO:0005886">
    <property type="term" value="C:plasma membrane"/>
    <property type="evidence" value="ECO:0007669"/>
    <property type="project" value="UniProtKB-SubCell"/>
</dbReference>
<dbReference type="GO" id="GO:0045259">
    <property type="term" value="C:proton-transporting ATP synthase complex"/>
    <property type="evidence" value="ECO:0007669"/>
    <property type="project" value="UniProtKB-KW"/>
</dbReference>
<dbReference type="GO" id="GO:0046933">
    <property type="term" value="F:proton-transporting ATP synthase activity, rotational mechanism"/>
    <property type="evidence" value="ECO:0007669"/>
    <property type="project" value="UniProtKB-UniRule"/>
</dbReference>
<dbReference type="GO" id="GO:0046961">
    <property type="term" value="F:proton-transporting ATPase activity, rotational mechanism"/>
    <property type="evidence" value="ECO:0007669"/>
    <property type="project" value="TreeGrafter"/>
</dbReference>
<dbReference type="CDD" id="cd06503">
    <property type="entry name" value="ATP-synt_Fo_b"/>
    <property type="match status" value="1"/>
</dbReference>
<dbReference type="Gene3D" id="6.10.250.1580">
    <property type="match status" value="1"/>
</dbReference>
<dbReference type="HAMAP" id="MF_01398">
    <property type="entry name" value="ATP_synth_b_bprime"/>
    <property type="match status" value="1"/>
</dbReference>
<dbReference type="InterPro" id="IPR028987">
    <property type="entry name" value="ATP_synth_B-like_membr_sf"/>
</dbReference>
<dbReference type="InterPro" id="IPR002146">
    <property type="entry name" value="ATP_synth_b/b'su_bac/chlpt"/>
</dbReference>
<dbReference type="InterPro" id="IPR005864">
    <property type="entry name" value="ATP_synth_F0_bsu_bac"/>
</dbReference>
<dbReference type="InterPro" id="IPR050059">
    <property type="entry name" value="ATP_synthase_B_chain"/>
</dbReference>
<dbReference type="NCBIfam" id="TIGR01144">
    <property type="entry name" value="ATP_synt_b"/>
    <property type="match status" value="1"/>
</dbReference>
<dbReference type="NCBIfam" id="NF004411">
    <property type="entry name" value="PRK05759.1-2"/>
    <property type="match status" value="1"/>
</dbReference>
<dbReference type="PANTHER" id="PTHR33445:SF1">
    <property type="entry name" value="ATP SYNTHASE SUBUNIT B"/>
    <property type="match status" value="1"/>
</dbReference>
<dbReference type="PANTHER" id="PTHR33445">
    <property type="entry name" value="ATP SYNTHASE SUBUNIT B', CHLOROPLASTIC"/>
    <property type="match status" value="1"/>
</dbReference>
<dbReference type="Pfam" id="PF00430">
    <property type="entry name" value="ATP-synt_B"/>
    <property type="match status" value="1"/>
</dbReference>
<dbReference type="SUPFAM" id="SSF81573">
    <property type="entry name" value="F1F0 ATP synthase subunit B, membrane domain"/>
    <property type="match status" value="1"/>
</dbReference>
<sequence length="156" mass="17050">MNLNATLFAQMVVFLILAWFTMKFVWPPLINALDERSKKIADGLSAAEKGKAELEAAHKRVDQELAQARNDGQQRIADAEKRAVAVADEIKAQAQAEAARIIAQAKADAEQQVVKARETLRGEVAALAVKGAEQILKREVDQAAHADLLNQLKAEL</sequence>
<comment type="function">
    <text evidence="1">F(1)F(0) ATP synthase produces ATP from ADP in the presence of a proton or sodium gradient. F-type ATPases consist of two structural domains, F(1) containing the extramembraneous catalytic core and F(0) containing the membrane proton channel, linked together by a central stalk and a peripheral stalk. During catalysis, ATP synthesis in the catalytic domain of F(1) is coupled via a rotary mechanism of the central stalk subunits to proton translocation.</text>
</comment>
<comment type="function">
    <text evidence="1">Component of the F(0) channel, it forms part of the peripheral stalk, linking F(1) to F(0).</text>
</comment>
<comment type="subunit">
    <text evidence="1">F-type ATPases have 2 components, F(1) - the catalytic core - and F(0) - the membrane proton channel. F(1) has five subunits: alpha(3), beta(3), gamma(1), delta(1), epsilon(1). F(0) has three main subunits: a(1), b(2) and c(10-14). The alpha and beta chains form an alternating ring which encloses part of the gamma chain. F(1) is attached to F(0) by a central stalk formed by the gamma and epsilon chains, while a peripheral stalk is formed by the delta and b chains.</text>
</comment>
<comment type="subcellular location">
    <subcellularLocation>
        <location evidence="1">Cell inner membrane</location>
        <topology evidence="1">Single-pass membrane protein</topology>
    </subcellularLocation>
</comment>
<comment type="similarity">
    <text evidence="1">Belongs to the ATPase B chain family.</text>
</comment>
<accession>B2T7K4</accession>
<gene>
    <name evidence="1" type="primary">atpF</name>
    <name type="ordered locus">Bphyt_3898</name>
</gene>
<protein>
    <recommendedName>
        <fullName evidence="1">ATP synthase subunit b</fullName>
    </recommendedName>
    <alternativeName>
        <fullName evidence="1">ATP synthase F(0) sector subunit b</fullName>
    </alternativeName>
    <alternativeName>
        <fullName evidence="1">ATPase subunit I</fullName>
    </alternativeName>
    <alternativeName>
        <fullName evidence="1">F-type ATPase subunit b</fullName>
        <shortName evidence="1">F-ATPase subunit b</shortName>
    </alternativeName>
</protein>
<evidence type="ECO:0000255" key="1">
    <source>
        <dbReference type="HAMAP-Rule" id="MF_01398"/>
    </source>
</evidence>
<keyword id="KW-0066">ATP synthesis</keyword>
<keyword id="KW-0997">Cell inner membrane</keyword>
<keyword id="KW-1003">Cell membrane</keyword>
<keyword id="KW-0138">CF(0)</keyword>
<keyword id="KW-0375">Hydrogen ion transport</keyword>
<keyword id="KW-0406">Ion transport</keyword>
<keyword id="KW-0472">Membrane</keyword>
<keyword id="KW-0812">Transmembrane</keyword>
<keyword id="KW-1133">Transmembrane helix</keyword>
<keyword id="KW-0813">Transport</keyword>
<name>ATPF_PARPJ</name>
<organism>
    <name type="scientific">Paraburkholderia phytofirmans (strain DSM 17436 / LMG 22146 / PsJN)</name>
    <name type="common">Burkholderia phytofirmans</name>
    <dbReference type="NCBI Taxonomy" id="398527"/>
    <lineage>
        <taxon>Bacteria</taxon>
        <taxon>Pseudomonadati</taxon>
        <taxon>Pseudomonadota</taxon>
        <taxon>Betaproteobacteria</taxon>
        <taxon>Burkholderiales</taxon>
        <taxon>Burkholderiaceae</taxon>
        <taxon>Paraburkholderia</taxon>
    </lineage>
</organism>
<proteinExistence type="inferred from homology"/>
<feature type="chain" id="PRO_0000368390" description="ATP synthase subunit b">
    <location>
        <begin position="1"/>
        <end position="156"/>
    </location>
</feature>
<feature type="transmembrane region" description="Helical" evidence="1">
    <location>
        <begin position="7"/>
        <end position="27"/>
    </location>
</feature>